<feature type="chain" id="PRO_0000293642" description="UPF0441 protein YgiB">
    <location>
        <begin position="1"/>
        <end position="223"/>
    </location>
</feature>
<feature type="region of interest" description="Disordered" evidence="2">
    <location>
        <begin position="178"/>
        <end position="223"/>
    </location>
</feature>
<feature type="compositionally biased region" description="Low complexity" evidence="2">
    <location>
        <begin position="178"/>
        <end position="195"/>
    </location>
</feature>
<feature type="compositionally biased region" description="Polar residues" evidence="2">
    <location>
        <begin position="204"/>
        <end position="223"/>
    </location>
</feature>
<proteinExistence type="inferred from homology"/>
<organism>
    <name type="scientific">Salmonella typhimurium (strain LT2 / SGSC1412 / ATCC 700720)</name>
    <dbReference type="NCBI Taxonomy" id="99287"/>
    <lineage>
        <taxon>Bacteria</taxon>
        <taxon>Pseudomonadati</taxon>
        <taxon>Pseudomonadota</taxon>
        <taxon>Gammaproteobacteria</taxon>
        <taxon>Enterobacterales</taxon>
        <taxon>Enterobacteriaceae</taxon>
        <taxon>Salmonella</taxon>
    </lineage>
</organism>
<accession>Q7CPS1</accession>
<evidence type="ECO:0000255" key="1">
    <source>
        <dbReference type="HAMAP-Rule" id="MF_01188"/>
    </source>
</evidence>
<evidence type="ECO:0000256" key="2">
    <source>
        <dbReference type="SAM" id="MobiDB-lite"/>
    </source>
</evidence>
<reference key="1">
    <citation type="journal article" date="2001" name="Nature">
        <title>Complete genome sequence of Salmonella enterica serovar Typhimurium LT2.</title>
        <authorList>
            <person name="McClelland M."/>
            <person name="Sanderson K.E."/>
            <person name="Spieth J."/>
            <person name="Clifton S.W."/>
            <person name="Latreille P."/>
            <person name="Courtney L."/>
            <person name="Porwollik S."/>
            <person name="Ali J."/>
            <person name="Dante M."/>
            <person name="Du F."/>
            <person name="Hou S."/>
            <person name="Layman D."/>
            <person name="Leonard S."/>
            <person name="Nguyen C."/>
            <person name="Scott K."/>
            <person name="Holmes A."/>
            <person name="Grewal N."/>
            <person name="Mulvaney E."/>
            <person name="Ryan E."/>
            <person name="Sun H."/>
            <person name="Florea L."/>
            <person name="Miller W."/>
            <person name="Stoneking T."/>
            <person name="Nhan M."/>
            <person name="Waterston R."/>
            <person name="Wilson R.K."/>
        </authorList>
    </citation>
    <scope>NUCLEOTIDE SEQUENCE [LARGE SCALE GENOMIC DNA]</scope>
    <source>
        <strain>LT2 / SGSC1412 / ATCC 700720</strain>
    </source>
</reference>
<sequence>MKRTKSIHHASFRKSWSARHLTPVALAVTAVFMLAGCEKSDETVSLYQNADDCSAANPGKSAECTTAYNNALKEAERTAPKYATREDCVAEFGEGQCQQAPAQAGMAPENQAQAQQSSGSFWMPLMAGYMMGRLMGGGAGFAQQPLFSSKNPASPAYGKYTDAAGKNYGAAQPGRTMTVPKTAMAPKPATTTTVTRGGFGESVAKQSTMQRSAAGTSTRSMGG</sequence>
<name>YGIB_SALTY</name>
<gene>
    <name evidence="1" type="primary">ygiB</name>
    <name type="ordered locus">STM3187</name>
</gene>
<comment type="similarity">
    <text evidence="1">Belongs to the UPF0441 family.</text>
</comment>
<dbReference type="EMBL" id="AE006468">
    <property type="protein sequence ID" value="AAL22061.1"/>
    <property type="molecule type" value="Genomic_DNA"/>
</dbReference>
<dbReference type="RefSeq" id="NP_462102.1">
    <property type="nucleotide sequence ID" value="NC_003197.2"/>
</dbReference>
<dbReference type="RefSeq" id="WP_000831528.1">
    <property type="nucleotide sequence ID" value="NC_003197.2"/>
</dbReference>
<dbReference type="STRING" id="99287.STM3187"/>
<dbReference type="PaxDb" id="99287-STM3187"/>
<dbReference type="GeneID" id="1254710"/>
<dbReference type="KEGG" id="stm:STM3187"/>
<dbReference type="PATRIC" id="fig|99287.12.peg.3380"/>
<dbReference type="HOGENOM" id="CLU_095624_0_0_6"/>
<dbReference type="OMA" id="NRYYSQP"/>
<dbReference type="PhylomeDB" id="Q7CPS1"/>
<dbReference type="BioCyc" id="SENT99287:STM3187-MONOMER"/>
<dbReference type="Proteomes" id="UP000001014">
    <property type="component" value="Chromosome"/>
</dbReference>
<dbReference type="HAMAP" id="MF_01188">
    <property type="entry name" value="UPF0441"/>
    <property type="match status" value="1"/>
</dbReference>
<dbReference type="InterPro" id="IPR009576">
    <property type="entry name" value="Biofilm_formation_YgiB"/>
</dbReference>
<dbReference type="NCBIfam" id="NF008655">
    <property type="entry name" value="PRK11653.1"/>
    <property type="match status" value="1"/>
</dbReference>
<dbReference type="Pfam" id="PF06693">
    <property type="entry name" value="DUF1190"/>
    <property type="match status" value="1"/>
</dbReference>
<protein>
    <recommendedName>
        <fullName evidence="1">UPF0441 protein YgiB</fullName>
    </recommendedName>
</protein>
<keyword id="KW-1185">Reference proteome</keyword>